<proteinExistence type="inferred from homology"/>
<dbReference type="EC" id="1.2.1.70" evidence="1"/>
<dbReference type="EMBL" id="CP000828">
    <property type="protein sequence ID" value="ABW30704.1"/>
    <property type="molecule type" value="Genomic_DNA"/>
</dbReference>
<dbReference type="RefSeq" id="WP_012165918.1">
    <property type="nucleotide sequence ID" value="NC_009925.1"/>
</dbReference>
<dbReference type="SMR" id="B0BZF9"/>
<dbReference type="STRING" id="329726.AM1_5760"/>
<dbReference type="KEGG" id="amr:AM1_5760"/>
<dbReference type="eggNOG" id="COG0373">
    <property type="taxonomic scope" value="Bacteria"/>
</dbReference>
<dbReference type="HOGENOM" id="CLU_035113_2_1_3"/>
<dbReference type="OrthoDB" id="110209at2"/>
<dbReference type="UniPathway" id="UPA00251">
    <property type="reaction ID" value="UER00316"/>
</dbReference>
<dbReference type="UniPathway" id="UPA00668"/>
<dbReference type="Proteomes" id="UP000000268">
    <property type="component" value="Chromosome"/>
</dbReference>
<dbReference type="GO" id="GO:0008883">
    <property type="term" value="F:glutamyl-tRNA reductase activity"/>
    <property type="evidence" value="ECO:0007669"/>
    <property type="project" value="UniProtKB-UniRule"/>
</dbReference>
<dbReference type="GO" id="GO:0050661">
    <property type="term" value="F:NADP binding"/>
    <property type="evidence" value="ECO:0007669"/>
    <property type="project" value="InterPro"/>
</dbReference>
<dbReference type="GO" id="GO:0015995">
    <property type="term" value="P:chlorophyll biosynthetic process"/>
    <property type="evidence" value="ECO:0007669"/>
    <property type="project" value="UniProtKB-UniRule"/>
</dbReference>
<dbReference type="GO" id="GO:0006782">
    <property type="term" value="P:protoporphyrinogen IX biosynthetic process"/>
    <property type="evidence" value="ECO:0007669"/>
    <property type="project" value="UniProtKB-UniRule"/>
</dbReference>
<dbReference type="CDD" id="cd05213">
    <property type="entry name" value="NAD_bind_Glutamyl_tRNA_reduct"/>
    <property type="match status" value="1"/>
</dbReference>
<dbReference type="FunFam" id="3.30.460.30:FF:000001">
    <property type="entry name" value="Glutamyl-tRNA reductase"/>
    <property type="match status" value="1"/>
</dbReference>
<dbReference type="FunFam" id="3.40.50.720:FF:000031">
    <property type="entry name" value="Glutamyl-tRNA reductase"/>
    <property type="match status" value="1"/>
</dbReference>
<dbReference type="Gene3D" id="3.30.460.30">
    <property type="entry name" value="Glutamyl-tRNA reductase, N-terminal domain"/>
    <property type="match status" value="1"/>
</dbReference>
<dbReference type="Gene3D" id="3.40.50.720">
    <property type="entry name" value="NAD(P)-binding Rossmann-like Domain"/>
    <property type="match status" value="1"/>
</dbReference>
<dbReference type="HAMAP" id="MF_00087">
    <property type="entry name" value="Glu_tRNA_reductase"/>
    <property type="match status" value="1"/>
</dbReference>
<dbReference type="InterPro" id="IPR000343">
    <property type="entry name" value="4pyrrol_synth_GluRdtase"/>
</dbReference>
<dbReference type="InterPro" id="IPR015896">
    <property type="entry name" value="4pyrrol_synth_GluRdtase_dimer"/>
</dbReference>
<dbReference type="InterPro" id="IPR015895">
    <property type="entry name" value="4pyrrol_synth_GluRdtase_N"/>
</dbReference>
<dbReference type="InterPro" id="IPR018214">
    <property type="entry name" value="GluRdtase_CS"/>
</dbReference>
<dbReference type="InterPro" id="IPR036453">
    <property type="entry name" value="GluRdtase_dimer_dom_sf"/>
</dbReference>
<dbReference type="InterPro" id="IPR036343">
    <property type="entry name" value="GluRdtase_N_sf"/>
</dbReference>
<dbReference type="InterPro" id="IPR036291">
    <property type="entry name" value="NAD(P)-bd_dom_sf"/>
</dbReference>
<dbReference type="InterPro" id="IPR006151">
    <property type="entry name" value="Shikm_DH/Glu-tRNA_Rdtase"/>
</dbReference>
<dbReference type="NCBIfam" id="TIGR01035">
    <property type="entry name" value="hemA"/>
    <property type="match status" value="1"/>
</dbReference>
<dbReference type="NCBIfam" id="NF000744">
    <property type="entry name" value="PRK00045.1-3"/>
    <property type="match status" value="1"/>
</dbReference>
<dbReference type="PANTHER" id="PTHR43120">
    <property type="entry name" value="GLUTAMYL-TRNA REDUCTASE 1, CHLOROPLASTIC"/>
    <property type="match status" value="1"/>
</dbReference>
<dbReference type="PANTHER" id="PTHR43120:SF1">
    <property type="entry name" value="GLUTAMYL-TRNA REDUCTASE 1, CHLOROPLASTIC"/>
    <property type="match status" value="1"/>
</dbReference>
<dbReference type="Pfam" id="PF00745">
    <property type="entry name" value="GlutR_dimer"/>
    <property type="match status" value="1"/>
</dbReference>
<dbReference type="Pfam" id="PF05201">
    <property type="entry name" value="GlutR_N"/>
    <property type="match status" value="1"/>
</dbReference>
<dbReference type="Pfam" id="PF01488">
    <property type="entry name" value="Shikimate_DH"/>
    <property type="match status" value="1"/>
</dbReference>
<dbReference type="PIRSF" id="PIRSF000445">
    <property type="entry name" value="4pyrrol_synth_GluRdtase"/>
    <property type="match status" value="1"/>
</dbReference>
<dbReference type="SUPFAM" id="SSF69742">
    <property type="entry name" value="Glutamyl tRNA-reductase catalytic, N-terminal domain"/>
    <property type="match status" value="1"/>
</dbReference>
<dbReference type="SUPFAM" id="SSF69075">
    <property type="entry name" value="Glutamyl tRNA-reductase dimerization domain"/>
    <property type="match status" value="1"/>
</dbReference>
<dbReference type="SUPFAM" id="SSF51735">
    <property type="entry name" value="NAD(P)-binding Rossmann-fold domains"/>
    <property type="match status" value="1"/>
</dbReference>
<dbReference type="PROSITE" id="PS00747">
    <property type="entry name" value="GLUTR"/>
    <property type="match status" value="1"/>
</dbReference>
<evidence type="ECO:0000255" key="1">
    <source>
        <dbReference type="HAMAP-Rule" id="MF_00087"/>
    </source>
</evidence>
<accession>B0BZF9</accession>
<sequence length="433" mass="48281">MNIAVVGLSHKTAPVDVREKLSIPDDVKEKATSQLRSYPHLEEVAILSTCNRMEVYVVAQETDDGIRELTQFLSEWSQIPLLELRQHLFILLHQDAVMHLMRVSAGLDSLVLGEGQILAQVKQTHKLSQKYSGAGPILNRLFKQAISAGKRVRTETSIGTGAVSISSAAVELAQIKTEDLSAHRVAIIGAGKMSRLLVKHLLSKGANQIAILNRSLKRAEQLADQFQGADLKLHTLADMQAVLTESDLIFTSTASTEPLLDRDILEPIVCDRQSCMIFDISVPRNVHSNVNELSQVHAFNVDDLKAVVAQNQESRRQMALEAESLLEEEVASFDVWWRSLETVPTISSLRTKVESIREQELEKALSRLGTEFAEKHQEVIEALTRGIVNKILHDPMVQLRAQQDIEVRRKAMQSLNMLFNLNSSQGVAKQRNT</sequence>
<comment type="function">
    <text evidence="1">Catalyzes the NADPH-dependent reduction of glutamyl-tRNA(Glu) to glutamate 1-semialdehyde (GSA).</text>
</comment>
<comment type="catalytic activity">
    <reaction evidence="1">
        <text>(S)-4-amino-5-oxopentanoate + tRNA(Glu) + NADP(+) = L-glutamyl-tRNA(Glu) + NADPH + H(+)</text>
        <dbReference type="Rhea" id="RHEA:12344"/>
        <dbReference type="Rhea" id="RHEA-COMP:9663"/>
        <dbReference type="Rhea" id="RHEA-COMP:9680"/>
        <dbReference type="ChEBI" id="CHEBI:15378"/>
        <dbReference type="ChEBI" id="CHEBI:57501"/>
        <dbReference type="ChEBI" id="CHEBI:57783"/>
        <dbReference type="ChEBI" id="CHEBI:58349"/>
        <dbReference type="ChEBI" id="CHEBI:78442"/>
        <dbReference type="ChEBI" id="CHEBI:78520"/>
        <dbReference type="EC" id="1.2.1.70"/>
    </reaction>
</comment>
<comment type="pathway">
    <text evidence="1">Porphyrin-containing compound metabolism; protoporphyrin-IX biosynthesis; 5-aminolevulinate from L-glutamyl-tRNA(Glu): step 1/2.</text>
</comment>
<comment type="pathway">
    <text evidence="1">Porphyrin-containing compound metabolism; chlorophyll biosynthesis.</text>
</comment>
<comment type="subunit">
    <text evidence="1">Homodimer.</text>
</comment>
<comment type="domain">
    <text evidence="1">Possesses an unusual extended V-shaped dimeric structure with each monomer consisting of three distinct domains arranged along a curved 'spinal' alpha-helix. The N-terminal catalytic domain specifically recognizes the glutamate moiety of the substrate. The second domain is the NADPH-binding domain, and the third C-terminal domain is responsible for dimerization.</text>
</comment>
<comment type="miscellaneous">
    <text evidence="1">During catalysis, the active site Cys acts as a nucleophile attacking the alpha-carbonyl group of tRNA-bound glutamate with the formation of a thioester intermediate between enzyme and glutamate, and the concomitant release of tRNA(Glu). The thioester intermediate is finally reduced by direct hydride transfer from NADPH, to form the product GSA.</text>
</comment>
<comment type="similarity">
    <text evidence="1">Belongs to the glutamyl-tRNA reductase family.</text>
</comment>
<gene>
    <name evidence="1" type="primary">hemA</name>
    <name type="ordered locus">AM1_5760</name>
</gene>
<organism>
    <name type="scientific">Acaryochloris marina (strain MBIC 11017)</name>
    <dbReference type="NCBI Taxonomy" id="329726"/>
    <lineage>
        <taxon>Bacteria</taxon>
        <taxon>Bacillati</taxon>
        <taxon>Cyanobacteriota</taxon>
        <taxon>Cyanophyceae</taxon>
        <taxon>Acaryochloridales</taxon>
        <taxon>Acaryochloridaceae</taxon>
        <taxon>Acaryochloris</taxon>
    </lineage>
</organism>
<feature type="chain" id="PRO_1000075400" description="Glutamyl-tRNA reductase">
    <location>
        <begin position="1"/>
        <end position="433"/>
    </location>
</feature>
<feature type="active site" description="Nucleophile" evidence="1">
    <location>
        <position position="50"/>
    </location>
</feature>
<feature type="binding site" evidence="1">
    <location>
        <begin position="49"/>
        <end position="52"/>
    </location>
    <ligand>
        <name>substrate</name>
    </ligand>
</feature>
<feature type="binding site" evidence="1">
    <location>
        <position position="109"/>
    </location>
    <ligand>
        <name>substrate</name>
    </ligand>
</feature>
<feature type="binding site" evidence="1">
    <location>
        <begin position="114"/>
        <end position="116"/>
    </location>
    <ligand>
        <name>substrate</name>
    </ligand>
</feature>
<feature type="binding site" evidence="1">
    <location>
        <position position="120"/>
    </location>
    <ligand>
        <name>substrate</name>
    </ligand>
</feature>
<feature type="binding site" evidence="1">
    <location>
        <begin position="189"/>
        <end position="194"/>
    </location>
    <ligand>
        <name>NADP(+)</name>
        <dbReference type="ChEBI" id="CHEBI:58349"/>
    </ligand>
</feature>
<feature type="site" description="Important for activity" evidence="1">
    <location>
        <position position="99"/>
    </location>
</feature>
<protein>
    <recommendedName>
        <fullName evidence="1">Glutamyl-tRNA reductase</fullName>
        <shortName evidence="1">GluTR</shortName>
        <ecNumber evidence="1">1.2.1.70</ecNumber>
    </recommendedName>
</protein>
<reference key="1">
    <citation type="journal article" date="2008" name="Proc. Natl. Acad. Sci. U.S.A.">
        <title>Niche adaptation and genome expansion in the chlorophyll d-producing cyanobacterium Acaryochloris marina.</title>
        <authorList>
            <person name="Swingley W.D."/>
            <person name="Chen M."/>
            <person name="Cheung P.C."/>
            <person name="Conrad A.L."/>
            <person name="Dejesa L.C."/>
            <person name="Hao J."/>
            <person name="Honchak B.M."/>
            <person name="Karbach L.E."/>
            <person name="Kurdoglu A."/>
            <person name="Lahiri S."/>
            <person name="Mastrian S.D."/>
            <person name="Miyashita H."/>
            <person name="Page L."/>
            <person name="Ramakrishna P."/>
            <person name="Satoh S."/>
            <person name="Sattley W.M."/>
            <person name="Shimada Y."/>
            <person name="Taylor H.L."/>
            <person name="Tomo T."/>
            <person name="Tsuchiya T."/>
            <person name="Wang Z.T."/>
            <person name="Raymond J."/>
            <person name="Mimuro M."/>
            <person name="Blankenship R.E."/>
            <person name="Touchman J.W."/>
        </authorList>
    </citation>
    <scope>NUCLEOTIDE SEQUENCE [LARGE SCALE GENOMIC DNA]</scope>
    <source>
        <strain>MBIC 11017</strain>
    </source>
</reference>
<name>HEM1_ACAM1</name>
<keyword id="KW-0149">Chlorophyll biosynthesis</keyword>
<keyword id="KW-0521">NADP</keyword>
<keyword id="KW-0560">Oxidoreductase</keyword>
<keyword id="KW-0627">Porphyrin biosynthesis</keyword>
<keyword id="KW-1185">Reference proteome</keyword>